<name>AIFM1_MOUSE</name>
<dbReference type="EC" id="1.6.99.-" evidence="7"/>
<dbReference type="EMBL" id="AF100927">
    <property type="protein sequence ID" value="AAD16435.1"/>
    <property type="molecule type" value="mRNA"/>
</dbReference>
<dbReference type="EMBL" id="DQ016499">
    <property type="protein sequence ID" value="AAY84740.1"/>
    <property type="molecule type" value="mRNA"/>
</dbReference>
<dbReference type="EMBL" id="BC003292">
    <property type="protein sequence ID" value="AAH03292.1"/>
    <property type="molecule type" value="mRNA"/>
</dbReference>
<dbReference type="CCDS" id="CCDS30109.1">
    <molecule id="Q9Z0X1-1"/>
</dbReference>
<dbReference type="RefSeq" id="NP_001277293.1">
    <property type="nucleotide sequence ID" value="NM_001290364.1"/>
</dbReference>
<dbReference type="RefSeq" id="NP_036149.1">
    <molecule id="Q9Z0X1-1"/>
    <property type="nucleotide sequence ID" value="NM_012019.3"/>
</dbReference>
<dbReference type="PDB" id="1GV4">
    <property type="method" value="X-ray"/>
    <property type="resolution" value="2.00 A"/>
    <property type="chains" value="A/B=122-610"/>
</dbReference>
<dbReference type="PDB" id="3GD3">
    <property type="method" value="X-ray"/>
    <property type="resolution" value="2.95 A"/>
    <property type="chains" value="A/B/C/D=78-612"/>
</dbReference>
<dbReference type="PDB" id="3GD4">
    <property type="method" value="X-ray"/>
    <property type="resolution" value="2.24 A"/>
    <property type="chains" value="A/B=102-612"/>
</dbReference>
<dbReference type="PDB" id="5MIU">
    <property type="method" value="X-ray"/>
    <property type="resolution" value="3.50 A"/>
    <property type="chains" value="A/B=78-612"/>
</dbReference>
<dbReference type="PDB" id="5MIV">
    <property type="method" value="X-ray"/>
    <property type="resolution" value="3.10 A"/>
    <property type="chains" value="A/C=78-612"/>
</dbReference>
<dbReference type="PDB" id="8QNS">
    <property type="method" value="X-ray"/>
    <property type="resolution" value="3.21 A"/>
    <property type="chains" value="A/D/G/J=101-612"/>
</dbReference>
<dbReference type="PDBsum" id="1GV4"/>
<dbReference type="PDBsum" id="3GD3"/>
<dbReference type="PDBsum" id="3GD4"/>
<dbReference type="PDBsum" id="5MIU"/>
<dbReference type="PDBsum" id="5MIV"/>
<dbReference type="PDBsum" id="8QNS"/>
<dbReference type="SMR" id="Q9Z0X1"/>
<dbReference type="BioGRID" id="205067">
    <property type="interactions" value="43"/>
</dbReference>
<dbReference type="FunCoup" id="Q9Z0X1">
    <property type="interactions" value="2834"/>
</dbReference>
<dbReference type="IntAct" id="Q9Z0X1">
    <property type="interactions" value="25"/>
</dbReference>
<dbReference type="MINT" id="Q9Z0X1"/>
<dbReference type="STRING" id="10090.ENSMUSP00000041104"/>
<dbReference type="GlyGen" id="Q9Z0X1">
    <property type="glycosylation" value="2 sites, 1 N-linked glycan (1 site), 1 O-linked glycan (1 site)"/>
</dbReference>
<dbReference type="iPTMnet" id="Q9Z0X1"/>
<dbReference type="PhosphoSitePlus" id="Q9Z0X1"/>
<dbReference type="SwissPalm" id="Q9Z0X1"/>
<dbReference type="jPOST" id="Q9Z0X1"/>
<dbReference type="PaxDb" id="10090-ENSMUSP00000041104"/>
<dbReference type="PeptideAtlas" id="Q9Z0X1"/>
<dbReference type="ProteomicsDB" id="296004">
    <molecule id="Q9Z0X1-1"/>
</dbReference>
<dbReference type="Pumba" id="Q9Z0X1"/>
<dbReference type="Antibodypedia" id="3528">
    <property type="antibodies" value="849 antibodies from 46 providers"/>
</dbReference>
<dbReference type="DNASU" id="26926"/>
<dbReference type="Ensembl" id="ENSMUST00000037349.8">
    <molecule id="Q9Z0X1-1"/>
    <property type="protein sequence ID" value="ENSMUSP00000041104.8"/>
    <property type="gene ID" value="ENSMUSG00000036932.15"/>
</dbReference>
<dbReference type="GeneID" id="26926"/>
<dbReference type="KEGG" id="mmu:26926"/>
<dbReference type="UCSC" id="uc009tcg.1">
    <molecule id="Q9Z0X1-1"/>
    <property type="organism name" value="mouse"/>
</dbReference>
<dbReference type="AGR" id="MGI:1349419"/>
<dbReference type="CTD" id="9131"/>
<dbReference type="MGI" id="MGI:1349419">
    <property type="gene designation" value="Aifm1"/>
</dbReference>
<dbReference type="VEuPathDB" id="HostDB:ENSMUSG00000036932"/>
<dbReference type="eggNOG" id="KOG1346">
    <property type="taxonomic scope" value="Eukaryota"/>
</dbReference>
<dbReference type="GeneTree" id="ENSGT00940000156455"/>
<dbReference type="HOGENOM" id="CLU_003291_5_3_1"/>
<dbReference type="InParanoid" id="Q9Z0X1"/>
<dbReference type="OrthoDB" id="6029at2759"/>
<dbReference type="PhylomeDB" id="Q9Z0X1"/>
<dbReference type="TreeFam" id="TF314028"/>
<dbReference type="SABIO-RK" id="Q9Z0X1"/>
<dbReference type="BioGRID-ORCS" id="26926">
    <property type="hits" value="11 hits in 77 CRISPR screens"/>
</dbReference>
<dbReference type="CD-CODE" id="CE726F99">
    <property type="entry name" value="Postsynaptic density"/>
</dbReference>
<dbReference type="ChiTaRS" id="Aifm1">
    <property type="organism name" value="mouse"/>
</dbReference>
<dbReference type="EvolutionaryTrace" id="Q9Z0X1"/>
<dbReference type="PRO" id="PR:Q9Z0X1"/>
<dbReference type="Proteomes" id="UP000000589">
    <property type="component" value="Chromosome X"/>
</dbReference>
<dbReference type="RNAct" id="Q9Z0X1">
    <property type="molecule type" value="protein"/>
</dbReference>
<dbReference type="Bgee" id="ENSMUSG00000036932">
    <property type="expression patterns" value="Expressed in ileal epithelium and 264 other cell types or tissues"/>
</dbReference>
<dbReference type="ExpressionAtlas" id="Q9Z0X1">
    <property type="expression patterns" value="baseline and differential"/>
</dbReference>
<dbReference type="GO" id="GO:0005737">
    <property type="term" value="C:cytoplasm"/>
    <property type="evidence" value="ECO:0000314"/>
    <property type="project" value="MGI"/>
</dbReference>
<dbReference type="GO" id="GO:0005829">
    <property type="term" value="C:cytosol"/>
    <property type="evidence" value="ECO:0000314"/>
    <property type="project" value="UniProtKB"/>
</dbReference>
<dbReference type="GO" id="GO:0005743">
    <property type="term" value="C:mitochondrial inner membrane"/>
    <property type="evidence" value="ECO:0007669"/>
    <property type="project" value="UniProtKB-SubCell"/>
</dbReference>
<dbReference type="GO" id="GO:0005758">
    <property type="term" value="C:mitochondrial intermembrane space"/>
    <property type="evidence" value="ECO:0000250"/>
    <property type="project" value="UniProtKB"/>
</dbReference>
<dbReference type="GO" id="GO:0005741">
    <property type="term" value="C:mitochondrial outer membrane"/>
    <property type="evidence" value="ECO:0000304"/>
    <property type="project" value="MGI"/>
</dbReference>
<dbReference type="GO" id="GO:0005739">
    <property type="term" value="C:mitochondrion"/>
    <property type="evidence" value="ECO:0000314"/>
    <property type="project" value="UniProtKB"/>
</dbReference>
<dbReference type="GO" id="GO:0005634">
    <property type="term" value="C:nucleus"/>
    <property type="evidence" value="ECO:0000314"/>
    <property type="project" value="UniProtKB"/>
</dbReference>
<dbReference type="GO" id="GO:0048471">
    <property type="term" value="C:perinuclear region of cytoplasm"/>
    <property type="evidence" value="ECO:0007669"/>
    <property type="project" value="UniProtKB-SubCell"/>
</dbReference>
<dbReference type="GO" id="GO:0003677">
    <property type="term" value="F:DNA binding"/>
    <property type="evidence" value="ECO:0000314"/>
    <property type="project" value="UniProtKB"/>
</dbReference>
<dbReference type="GO" id="GO:0004174">
    <property type="term" value="F:electron-transferring-flavoprotein dehydrogenase activity"/>
    <property type="evidence" value="ECO:0000304"/>
    <property type="project" value="MGI"/>
</dbReference>
<dbReference type="GO" id="GO:0071949">
    <property type="term" value="F:FAD binding"/>
    <property type="evidence" value="ECO:0000314"/>
    <property type="project" value="UniProtKB"/>
</dbReference>
<dbReference type="GO" id="GO:0016174">
    <property type="term" value="F:NAD(P)H oxidase H2O2-forming activity"/>
    <property type="evidence" value="ECO:0000314"/>
    <property type="project" value="UniProtKB"/>
</dbReference>
<dbReference type="GO" id="GO:0003954">
    <property type="term" value="F:NADH dehydrogenase activity"/>
    <property type="evidence" value="ECO:0007669"/>
    <property type="project" value="RHEA"/>
</dbReference>
<dbReference type="GO" id="GO:0072572">
    <property type="term" value="F:poly-ADP-D-ribose binding"/>
    <property type="evidence" value="ECO:0000314"/>
    <property type="project" value="UniProtKB"/>
</dbReference>
<dbReference type="GO" id="GO:0046983">
    <property type="term" value="F:protein dimerization activity"/>
    <property type="evidence" value="ECO:0007669"/>
    <property type="project" value="InterPro"/>
</dbReference>
<dbReference type="GO" id="GO:0008637">
    <property type="term" value="P:apoptotic mitochondrial changes"/>
    <property type="evidence" value="ECO:0000304"/>
    <property type="project" value="MGI"/>
</dbReference>
<dbReference type="GO" id="GO:0070059">
    <property type="term" value="P:intrinsic apoptotic signaling pathway in response to endoplasmic reticulum stress"/>
    <property type="evidence" value="ECO:0000315"/>
    <property type="project" value="UniProtKB"/>
</dbReference>
<dbReference type="GO" id="GO:0033108">
    <property type="term" value="P:mitochondrial respiratory chain complex assembly"/>
    <property type="evidence" value="ECO:0000315"/>
    <property type="project" value="UniProtKB"/>
</dbReference>
<dbReference type="GO" id="GO:0051402">
    <property type="term" value="P:neuron apoptotic process"/>
    <property type="evidence" value="ECO:0000316"/>
    <property type="project" value="MGI"/>
</dbReference>
<dbReference type="GO" id="GO:0043065">
    <property type="term" value="P:positive regulation of apoptotic process"/>
    <property type="evidence" value="ECO:0000250"/>
    <property type="project" value="UniProtKB"/>
</dbReference>
<dbReference type="GO" id="GO:0060545">
    <property type="term" value="P:positive regulation of necroptotic process"/>
    <property type="evidence" value="ECO:0000314"/>
    <property type="project" value="UniProtKB"/>
</dbReference>
<dbReference type="GO" id="GO:0045041">
    <property type="term" value="P:protein import into mitochondrial intermembrane space"/>
    <property type="evidence" value="ECO:0000315"/>
    <property type="project" value="UniProtKB"/>
</dbReference>
<dbReference type="GO" id="GO:1902510">
    <property type="term" value="P:regulation of apoptotic DNA fragmentation"/>
    <property type="evidence" value="ECO:0000316"/>
    <property type="project" value="MGI"/>
</dbReference>
<dbReference type="GO" id="GO:0006979">
    <property type="term" value="P:response to oxidative stress"/>
    <property type="evidence" value="ECO:0000304"/>
    <property type="project" value="UniProtKB"/>
</dbReference>
<dbReference type="FunFam" id="3.30.390.30:FF:000007">
    <property type="entry name" value="Putative apoptosis-inducing factor 1, mitochondrial"/>
    <property type="match status" value="1"/>
</dbReference>
<dbReference type="Gene3D" id="3.30.390.30">
    <property type="match status" value="1"/>
</dbReference>
<dbReference type="Gene3D" id="3.50.50.60">
    <property type="entry name" value="FAD/NAD(P)-binding domain"/>
    <property type="match status" value="2"/>
</dbReference>
<dbReference type="InterPro" id="IPR029324">
    <property type="entry name" value="AIF_C"/>
</dbReference>
<dbReference type="InterPro" id="IPR050446">
    <property type="entry name" value="FAD-oxidoreductase/Apoptosis"/>
</dbReference>
<dbReference type="InterPro" id="IPR036188">
    <property type="entry name" value="FAD/NAD-bd_sf"/>
</dbReference>
<dbReference type="InterPro" id="IPR023753">
    <property type="entry name" value="FAD/NAD-binding_dom"/>
</dbReference>
<dbReference type="InterPro" id="IPR016156">
    <property type="entry name" value="FAD/NAD-linked_Rdtase_dimer_sf"/>
</dbReference>
<dbReference type="PANTHER" id="PTHR43557">
    <property type="entry name" value="APOPTOSIS-INDUCING FACTOR 1"/>
    <property type="match status" value="1"/>
</dbReference>
<dbReference type="PANTHER" id="PTHR43557:SF4">
    <property type="entry name" value="APOPTOSIS-INDUCING FACTOR 1, MITOCHONDRIAL"/>
    <property type="match status" value="1"/>
</dbReference>
<dbReference type="Pfam" id="PF14721">
    <property type="entry name" value="AIF_C"/>
    <property type="match status" value="1"/>
</dbReference>
<dbReference type="Pfam" id="PF07992">
    <property type="entry name" value="Pyr_redox_2"/>
    <property type="match status" value="1"/>
</dbReference>
<dbReference type="PRINTS" id="PR00368">
    <property type="entry name" value="FADPNR"/>
</dbReference>
<dbReference type="PRINTS" id="PR00411">
    <property type="entry name" value="PNDRDTASEI"/>
</dbReference>
<dbReference type="SMART" id="SM01353">
    <property type="entry name" value="AIF_C"/>
    <property type="match status" value="1"/>
</dbReference>
<dbReference type="SUPFAM" id="SSF51905">
    <property type="entry name" value="FAD/NAD(P)-binding domain"/>
    <property type="match status" value="2"/>
</dbReference>
<dbReference type="SUPFAM" id="SSF55424">
    <property type="entry name" value="FAD/NAD-linked reductases, dimerisation (C-terminal) domain"/>
    <property type="match status" value="1"/>
</dbReference>
<feature type="transit peptide" description="Mitochondrion" evidence="1">
    <location>
        <begin position="1"/>
        <end position="54"/>
    </location>
</feature>
<feature type="propeptide" id="PRO_0000401936" description="Removed in mature form" evidence="10">
    <location>
        <begin position="55"/>
        <end position="101"/>
    </location>
</feature>
<feature type="chain" id="PRO_0000022031" description="Apoptosis-inducing factor 1, mitochondrial">
    <location>
        <begin position="102"/>
        <end position="612"/>
    </location>
</feature>
<feature type="region of interest" description="FAD-dependent oxidoreductase">
    <location>
        <begin position="133"/>
        <end position="482"/>
    </location>
</feature>
<feature type="region of interest" description="Disordered" evidence="3">
    <location>
        <begin position="512"/>
        <end position="551"/>
    </location>
</feature>
<feature type="short sequence motif" description="Mitochondrial localization signal" evidence="13">
    <location>
        <begin position="1"/>
        <end position="30"/>
    </location>
</feature>
<feature type="short sequence motif" description="Mitochondrial localization signal" evidence="13">
    <location>
        <begin position="62"/>
        <end position="88"/>
    </location>
</feature>
<feature type="short sequence motif" description="Nuclear localization signal" evidence="2">
    <location>
        <begin position="445"/>
        <end position="450"/>
    </location>
</feature>
<feature type="compositionally biased region" description="Polar residues" evidence="3">
    <location>
        <begin position="512"/>
        <end position="528"/>
    </location>
</feature>
<feature type="binding site" evidence="4 7 16 17">
    <location>
        <begin position="137"/>
        <end position="141"/>
    </location>
    <ligand>
        <name>FAD</name>
        <dbReference type="ChEBI" id="CHEBI:57692"/>
    </ligand>
</feature>
<feature type="binding site" evidence="4 7 17">
    <location>
        <begin position="163"/>
        <end position="164"/>
    </location>
    <ligand>
        <name>FAD</name>
        <dbReference type="ChEBI" id="CHEBI:57692"/>
    </ligand>
</feature>
<feature type="binding site" evidence="4 7 16 17">
    <location>
        <position position="171"/>
    </location>
    <ligand>
        <name>FAD</name>
        <dbReference type="ChEBI" id="CHEBI:57692"/>
    </ligand>
</feature>
<feature type="binding site" evidence="4 7 16">
    <location>
        <position position="176"/>
    </location>
    <ligand>
        <name>FAD</name>
        <dbReference type="ChEBI" id="CHEBI:57692"/>
    </ligand>
</feature>
<feature type="binding site" evidence="1">
    <location>
        <position position="195"/>
    </location>
    <ligand>
        <name>NAD(+)</name>
        <dbReference type="ChEBI" id="CHEBI:57540"/>
        <label>2</label>
    </ligand>
</feature>
<feature type="binding site" evidence="4 7 16 17">
    <location>
        <position position="232"/>
    </location>
    <ligand>
        <name>FAD</name>
        <dbReference type="ChEBI" id="CHEBI:57692"/>
    </ligand>
</feature>
<feature type="binding site" evidence="4 7 16 17">
    <location>
        <position position="284"/>
    </location>
    <ligand>
        <name>FAD</name>
        <dbReference type="ChEBI" id="CHEBI:57692"/>
    </ligand>
</feature>
<feature type="binding site" evidence="7 17">
    <location>
        <begin position="307"/>
        <end position="310"/>
    </location>
    <ligand>
        <name>NAD(+)</name>
        <dbReference type="ChEBI" id="CHEBI:57540"/>
        <label>1</label>
    </ligand>
</feature>
<feature type="binding site" evidence="7 17">
    <location>
        <position position="335"/>
    </location>
    <ligand>
        <name>NAD(+)</name>
        <dbReference type="ChEBI" id="CHEBI:57540"/>
        <label>1</label>
    </ligand>
</feature>
<feature type="binding site" evidence="7 17">
    <location>
        <position position="341"/>
    </location>
    <ligand>
        <name>NAD(+)</name>
        <dbReference type="ChEBI" id="CHEBI:57540"/>
        <label>1</label>
    </ligand>
</feature>
<feature type="binding site" evidence="7 17">
    <location>
        <position position="398"/>
    </location>
    <ligand>
        <name>NAD(+)</name>
        <dbReference type="ChEBI" id="CHEBI:57540"/>
        <label>1</label>
    </ligand>
</feature>
<feature type="binding site" evidence="7 16 17">
    <location>
        <position position="437"/>
    </location>
    <ligand>
        <name>FAD</name>
        <dbReference type="ChEBI" id="CHEBI:57692"/>
    </ligand>
</feature>
<feature type="binding site" evidence="7 17">
    <location>
        <begin position="452"/>
        <end position="453"/>
    </location>
    <ligand>
        <name>NAD(+)</name>
        <dbReference type="ChEBI" id="CHEBI:57540"/>
        <label>1</label>
    </ligand>
</feature>
<feature type="binding site" evidence="4 7 17">
    <location>
        <begin position="453"/>
        <end position="454"/>
    </location>
    <ligand>
        <name>FAD</name>
        <dbReference type="ChEBI" id="CHEBI:57692"/>
    </ligand>
</feature>
<feature type="binding site" evidence="4 7 16 17">
    <location>
        <position position="482"/>
    </location>
    <ligand>
        <name>FAD</name>
        <dbReference type="ChEBI" id="CHEBI:57692"/>
    </ligand>
</feature>
<feature type="binding site" evidence="7 17">
    <location>
        <position position="482"/>
    </location>
    <ligand>
        <name>NAD(+)</name>
        <dbReference type="ChEBI" id="CHEBI:57540"/>
        <label>1</label>
    </ligand>
</feature>
<feature type="binding site" evidence="1">
    <location>
        <position position="492"/>
    </location>
    <ligand>
        <name>NAD(+)</name>
        <dbReference type="ChEBI" id="CHEBI:57540"/>
        <label>2</label>
    </ligand>
</feature>
<feature type="binding site" evidence="1">
    <location>
        <position position="582"/>
    </location>
    <ligand>
        <name>NAD(+)</name>
        <dbReference type="ChEBI" id="CHEBI:57540"/>
        <label>2</label>
    </ligand>
</feature>
<feature type="modified residue" description="N6-succinyllysine" evidence="19">
    <location>
        <position position="108"/>
    </location>
</feature>
<feature type="modified residue" description="Phosphoserine" evidence="1">
    <location>
        <position position="115"/>
    </location>
</feature>
<feature type="modified residue" description="Phosphoserine" evidence="1">
    <location>
        <position position="267"/>
    </location>
</feature>
<feature type="modified residue" description="Phosphoserine" evidence="1">
    <location>
        <position position="370"/>
    </location>
</feature>
<feature type="modified residue" description="N6-acetyllysine" evidence="18">
    <location>
        <position position="387"/>
    </location>
</feature>
<feature type="modified residue" description="Phosphothreonine" evidence="1">
    <location>
        <position position="520"/>
    </location>
</feature>
<feature type="modified residue" description="Phosphoserine" evidence="1">
    <location>
        <position position="523"/>
    </location>
</feature>
<feature type="modified residue" description="Phosphoserine" evidence="1">
    <location>
        <position position="529"/>
    </location>
</feature>
<feature type="modified residue" description="N6-acetyllysine" evidence="18">
    <location>
        <position position="592"/>
    </location>
</feature>
<feature type="cross-link" description="Glycyl lysine isopeptide (Lys-Gly) (interchain with G-Cter in ubiquitin)" evidence="1">
    <location>
        <position position="254"/>
    </location>
</feature>
<feature type="splice variant" id="VSP_060486" description="In isoform 2.">
    <original>SQA</original>
    <variation>CEY</variation>
    <location>
        <begin position="322"/>
        <end position="324"/>
    </location>
</feature>
<feature type="splice variant" id="VSP_060487" description="In isoform 2.">
    <location>
        <begin position="325"/>
        <end position="612"/>
    </location>
</feature>
<feature type="mutagenesis site" description="Increases catalytic efficiency." evidence="4">
    <original>K</original>
    <variation>A</variation>
    <location>
        <position position="176"/>
    </location>
</feature>
<feature type="mutagenesis site" description="Increases redox potential, reacts faster to NADH and forms two-fold longer-lived CTC." evidence="7">
    <original>W</original>
    <variation>A</variation>
    <location>
        <position position="195"/>
    </location>
</feature>
<feature type="mutagenesis site" description="Abolished DNA-binding without affecting binding to poly-ADP-ribose chains; when associated with A-264." evidence="8">
    <original>K</original>
    <variation>A</variation>
    <location>
        <position position="254"/>
    </location>
</feature>
<feature type="mutagenesis site" description="Abolished DNA-binding without affecting binding to poly-ADP-ribose chains; when associated with A-254." evidence="8">
    <original>R</original>
    <variation>A</variation>
    <location>
        <position position="264"/>
    </location>
</feature>
<feature type="mutagenesis site" description="Increases catalytic efficiency 30-fold. Increases affinity for NADH 20-fold." evidence="4">
    <original>E</original>
    <variation>A</variation>
    <location>
        <position position="313"/>
    </location>
</feature>
<feature type="mutagenesis site" description="Abolished binding to poly-ADP-ribose chains, preventing induction of parthanatos." evidence="8">
    <original>RKIIK</original>
    <variation>AAIIA</variation>
    <location>
        <begin position="588"/>
        <end position="592"/>
    </location>
</feature>
<feature type="strand" evidence="20">
    <location>
        <begin position="129"/>
        <end position="137"/>
    </location>
</feature>
<feature type="helix" evidence="20">
    <location>
        <begin position="140"/>
        <end position="152"/>
    </location>
</feature>
<feature type="strand" evidence="20">
    <location>
        <begin position="157"/>
        <end position="166"/>
    </location>
</feature>
<feature type="helix" evidence="20">
    <location>
        <begin position="172"/>
        <end position="175"/>
    </location>
</feature>
<feature type="helix" evidence="20">
    <location>
        <begin position="177"/>
        <end position="179"/>
    </location>
</feature>
<feature type="helix" evidence="20">
    <location>
        <begin position="186"/>
        <end position="189"/>
    </location>
</feature>
<feature type="strand" evidence="20">
    <location>
        <begin position="191"/>
        <end position="193"/>
    </location>
</feature>
<feature type="strand" evidence="20">
    <location>
        <begin position="199"/>
        <end position="205"/>
    </location>
</feature>
<feature type="helix" evidence="20">
    <location>
        <begin position="207"/>
        <end position="209"/>
    </location>
</feature>
<feature type="helix" evidence="20">
    <location>
        <begin position="213"/>
        <end position="218"/>
    </location>
</feature>
<feature type="strand" evidence="20">
    <location>
        <begin position="223"/>
        <end position="229"/>
    </location>
</feature>
<feature type="strand" evidence="20">
    <location>
        <begin position="232"/>
        <end position="236"/>
    </location>
</feature>
<feature type="turn" evidence="20">
    <location>
        <begin position="237"/>
        <end position="240"/>
    </location>
</feature>
<feature type="strand" evidence="20">
    <location>
        <begin position="241"/>
        <end position="244"/>
    </location>
</feature>
<feature type="strand" evidence="20">
    <location>
        <begin position="249"/>
        <end position="257"/>
    </location>
</feature>
<feature type="strand" evidence="20">
    <location>
        <begin position="261"/>
        <end position="263"/>
    </location>
</feature>
<feature type="helix" evidence="20">
    <location>
        <begin position="267"/>
        <end position="270"/>
    </location>
</feature>
<feature type="helix" evidence="20">
    <location>
        <begin position="274"/>
        <end position="277"/>
    </location>
</feature>
<feature type="strand" evidence="20">
    <location>
        <begin position="280"/>
        <end position="282"/>
    </location>
</feature>
<feature type="helix" evidence="20">
    <location>
        <begin position="286"/>
        <end position="296"/>
    </location>
</feature>
<feature type="strand" evidence="20">
    <location>
        <begin position="300"/>
        <end position="305"/>
    </location>
</feature>
<feature type="helix" evidence="20">
    <location>
        <begin position="309"/>
        <end position="325"/>
    </location>
</feature>
<feature type="strand" evidence="20">
    <location>
        <begin position="328"/>
        <end position="332"/>
    </location>
</feature>
<feature type="strand" evidence="20">
    <location>
        <begin position="334"/>
        <end position="337"/>
    </location>
</feature>
<feature type="turn" evidence="20">
    <location>
        <begin position="338"/>
        <end position="342"/>
    </location>
</feature>
<feature type="helix" evidence="20">
    <location>
        <begin position="345"/>
        <end position="356"/>
    </location>
</feature>
<feature type="turn" evidence="20">
    <location>
        <begin position="357"/>
        <end position="359"/>
    </location>
</feature>
<feature type="strand" evidence="20">
    <location>
        <begin position="361"/>
        <end position="363"/>
    </location>
</feature>
<feature type="strand" evidence="20">
    <location>
        <begin position="368"/>
        <end position="374"/>
    </location>
</feature>
<feature type="strand" evidence="20">
    <location>
        <begin position="377"/>
        <end position="382"/>
    </location>
</feature>
<feature type="strand" evidence="20">
    <location>
        <begin position="387"/>
        <end position="395"/>
    </location>
</feature>
<feature type="strand" evidence="20">
    <location>
        <begin position="399"/>
        <end position="401"/>
    </location>
</feature>
<feature type="helix" evidence="20">
    <location>
        <begin position="404"/>
        <end position="406"/>
    </location>
</feature>
<feature type="turn" evidence="20">
    <location>
        <begin position="407"/>
        <end position="410"/>
    </location>
</feature>
<feature type="turn" evidence="20">
    <location>
        <begin position="415"/>
        <end position="417"/>
    </location>
</feature>
<feature type="strand" evidence="20">
    <location>
        <begin position="419"/>
        <end position="421"/>
    </location>
</feature>
<feature type="strand" evidence="20">
    <location>
        <begin position="426"/>
        <end position="429"/>
    </location>
</feature>
<feature type="strand" evidence="20">
    <location>
        <begin position="432"/>
        <end position="434"/>
    </location>
</feature>
<feature type="helix" evidence="20">
    <location>
        <begin position="436"/>
        <end position="438"/>
    </location>
</feature>
<feature type="strand" evidence="20">
    <location>
        <begin position="439"/>
        <end position="443"/>
    </location>
</feature>
<feature type="turn" evidence="20">
    <location>
        <begin position="444"/>
        <end position="446"/>
    </location>
</feature>
<feature type="strand" evidence="20">
    <location>
        <begin position="447"/>
        <end position="449"/>
    </location>
</feature>
<feature type="helix" evidence="20">
    <location>
        <begin position="454"/>
        <end position="468"/>
    </location>
</feature>
<feature type="turn" evidence="21">
    <location>
        <begin position="469"/>
        <end position="471"/>
    </location>
</feature>
<feature type="strand" evidence="20">
    <location>
        <begin position="480"/>
        <end position="486"/>
    </location>
</feature>
<feature type="strand" evidence="20">
    <location>
        <begin position="490"/>
        <end position="495"/>
    </location>
</feature>
<feature type="strand" evidence="23">
    <location>
        <begin position="499"/>
        <end position="501"/>
    </location>
</feature>
<feature type="strand" evidence="20">
    <location>
        <begin position="503"/>
        <end position="508"/>
    </location>
</feature>
<feature type="helix" evidence="20">
    <location>
        <begin position="516"/>
        <end position="523"/>
    </location>
</feature>
<feature type="helix" evidence="20">
    <location>
        <begin position="528"/>
        <end position="532"/>
    </location>
</feature>
<feature type="strand" evidence="22">
    <location>
        <begin position="539"/>
        <end position="542"/>
    </location>
</feature>
<feature type="helix" evidence="20">
    <location>
        <begin position="556"/>
        <end position="558"/>
    </location>
</feature>
<feature type="strand" evidence="20">
    <location>
        <begin position="561"/>
        <end position="579"/>
    </location>
</feature>
<feature type="helix" evidence="20">
    <location>
        <begin position="584"/>
        <end position="593"/>
    </location>
</feature>
<feature type="helix" evidence="20">
    <location>
        <begin position="600"/>
        <end position="604"/>
    </location>
</feature>
<feature type="helix" evidence="20">
    <location>
        <begin position="605"/>
        <end position="607"/>
    </location>
</feature>
<feature type="strand" evidence="24">
    <location>
        <begin position="609"/>
        <end position="611"/>
    </location>
</feature>
<reference key="1">
    <citation type="journal article" date="1999" name="Nature">
        <title>Molecular characterization of mitochondrial apoptosis-inducing factor.</title>
        <authorList>
            <person name="Susin S.A."/>
            <person name="Lorenzo H.K."/>
            <person name="Zamzami N."/>
            <person name="Marzo I."/>
            <person name="Snow B.E."/>
            <person name="Brothers G.M."/>
            <person name="Mangion J."/>
            <person name="Jacotot E."/>
            <person name="Costantini P."/>
            <person name="Loeffler M."/>
            <person name="Larochette N."/>
            <person name="Goodlett D.R."/>
            <person name="Aebersold R."/>
            <person name="Siderovski D.P."/>
            <person name="Penninger J.M."/>
            <person name="Kroemer G."/>
        </authorList>
    </citation>
    <scope>NUCLEOTIDE SEQUENCE [MRNA]</scope>
    <scope>PROTEIN SEQUENCE OF N-TERMINUS</scope>
    <scope>PROTEIN SEQUENCE OF 322-336</scope>
    <scope>FUNCTION</scope>
    <scope>COFACTOR</scope>
    <scope>IDENTIFICATION BY MASS SPECTROMETRY</scope>
    <scope>SUBCELLULAR LOCATION</scope>
</reference>
<reference evidence="14" key="2">
    <citation type="journal article" date="2006" name="J. Biol. Chem.">
        <title>Identification and characterization of AIFsh2, a mitochondrial apoptosis-inducing factor (AIF) isoform with NADH oxidase activity.</title>
        <authorList>
            <person name="Delettre C."/>
            <person name="Yuste V.J."/>
            <person name="Moubarak R.S."/>
            <person name="Bras M."/>
            <person name="Robert N."/>
            <person name="Susin S.A."/>
        </authorList>
    </citation>
    <scope>NUCLEOTIDE SEQUENCE [MRNA] (ISOFORM 2)</scope>
    <scope>SUBCELLULAR LOCATION (ISOFORM 2)</scope>
    <scope>TISSUE SPECIFICITY (ISOFORM 2)</scope>
    <source>
        <strain>C57BL/6J</strain>
    </source>
</reference>
<reference key="3">
    <citation type="journal article" date="2004" name="Genome Res.">
        <title>The status, quality, and expansion of the NIH full-length cDNA project: the Mammalian Gene Collection (MGC).</title>
        <authorList>
            <consortium name="The MGC Project Team"/>
        </authorList>
    </citation>
    <scope>NUCLEOTIDE SEQUENCE [LARGE SCALE MRNA]</scope>
    <source>
        <strain>FVB/N</strain>
        <tissue>Mammary gland</tissue>
    </source>
</reference>
<reference key="4">
    <citation type="submission" date="2009-01" db="UniProtKB">
        <authorList>
            <person name="Lubec G."/>
            <person name="Sunyer B."/>
            <person name="Chen W.-Q."/>
        </authorList>
    </citation>
    <scope>PROTEIN SEQUENCE OF 378-386</scope>
    <scope>IDENTIFICATION BY MASS SPECTROMETRY</scope>
    <source>
        <strain>OF1</strain>
        <tissue>Hippocampus</tissue>
    </source>
</reference>
<reference key="5">
    <citation type="journal article" date="2002" name="Science">
        <title>Mediation of poly(ADP-ribose) polymerase-1-dependent cell death by apoptosis-inducing factor.</title>
        <authorList>
            <person name="Yu S.W."/>
            <person name="Wang H."/>
            <person name="Poitras M.F."/>
            <person name="Coombs C."/>
            <person name="Bowers W.J."/>
            <person name="Federoff H.J."/>
            <person name="Poirier G.G."/>
            <person name="Dawson T.M."/>
            <person name="Dawson V.L."/>
        </authorList>
    </citation>
    <scope>FUNCTION</scope>
    <scope>SUBCELLULAR LOCATION</scope>
</reference>
<reference key="6">
    <citation type="journal article" date="2010" name="Cell">
        <title>A tissue-specific atlas of mouse protein phosphorylation and expression.</title>
        <authorList>
            <person name="Huttlin E.L."/>
            <person name="Jedrychowski M.P."/>
            <person name="Elias J.E."/>
            <person name="Goswami T."/>
            <person name="Rad R."/>
            <person name="Beausoleil S.A."/>
            <person name="Villen J."/>
            <person name="Haas W."/>
            <person name="Sowa M.E."/>
            <person name="Gygi S.P."/>
        </authorList>
    </citation>
    <scope>IDENTIFICATION BY MASS SPECTROMETRY [LARGE SCALE ANALYSIS]</scope>
    <source>
        <tissue>Brain</tissue>
        <tissue>Brown adipose tissue</tissue>
        <tissue>Heart</tissue>
        <tissue>Kidney</tissue>
        <tissue>Liver</tissue>
        <tissue>Lung</tissue>
        <tissue>Pancreas</tissue>
        <tissue>Spleen</tissue>
        <tissue>Testis</tissue>
    </source>
</reference>
<reference key="7">
    <citation type="journal article" date="2011" name="Sci. Signal.">
        <title>Poly(ADP-ribose) (PAR) binding to apoptosis-inducing factor is critical for PAR polymerase-1-dependent cell death (parthanatos).</title>
        <authorList>
            <person name="Wang Y."/>
            <person name="Kim N.S."/>
            <person name="Haince J.F."/>
            <person name="Kang H.C."/>
            <person name="David K.K."/>
            <person name="Andrabi S.A."/>
            <person name="Poirier G.G."/>
            <person name="Dawson V.L."/>
            <person name="Dawson T.M."/>
        </authorList>
    </citation>
    <scope>FUNCTION</scope>
    <scope>SUBCELLULAR LOCATION</scope>
    <scope>MUTAGENESIS OF LYS-254; ARG-264 AND 588-ARG--LYS-592</scope>
</reference>
<reference key="8">
    <citation type="journal article" date="2013" name="Mol. Cell">
        <title>SIRT5-mediated lysine desuccinylation impacts diverse metabolic pathways.</title>
        <authorList>
            <person name="Park J."/>
            <person name="Chen Y."/>
            <person name="Tishkoff D.X."/>
            <person name="Peng C."/>
            <person name="Tan M."/>
            <person name="Dai L."/>
            <person name="Xie Z."/>
            <person name="Zhang Y."/>
            <person name="Zwaans B.M."/>
            <person name="Skinner M.E."/>
            <person name="Lombard D.B."/>
            <person name="Zhao Y."/>
        </authorList>
    </citation>
    <scope>SUCCINYLATION [LARGE SCALE ANALYSIS] AT LYS-108</scope>
    <scope>IDENTIFICATION BY MASS SPECTROMETRY [LARGE SCALE ANALYSIS]</scope>
    <source>
        <tissue>Liver</tissue>
    </source>
</reference>
<reference key="9">
    <citation type="journal article" date="2013" name="Proc. Natl. Acad. Sci. U.S.A.">
        <title>Label-free quantitative proteomics of the lysine acetylome in mitochondria identifies substrates of SIRT3 in metabolic pathways.</title>
        <authorList>
            <person name="Rardin M.J."/>
            <person name="Newman J.C."/>
            <person name="Held J.M."/>
            <person name="Cusack M.P."/>
            <person name="Sorensen D.J."/>
            <person name="Li B."/>
            <person name="Schilling B."/>
            <person name="Mooney S.D."/>
            <person name="Kahn C.R."/>
            <person name="Verdin E."/>
            <person name="Gibson B.W."/>
        </authorList>
    </citation>
    <scope>ACETYLATION [LARGE SCALE ANALYSIS] AT LYS-387 AND LYS-592</scope>
    <scope>IDENTIFICATION BY MASS SPECTROMETRY [LARGE SCALE ANALYSIS]</scope>
    <source>
        <tissue>Liver</tissue>
    </source>
</reference>
<reference key="10">
    <citation type="journal article" date="2015" name="Mol. Cell">
        <title>Interaction between AIF and CHCHD4 Regulates Respiratory Chain Biogenesis.</title>
        <authorList>
            <person name="Hangen E."/>
            <person name="Feraud O."/>
            <person name="Lachkar S."/>
            <person name="Mou H."/>
            <person name="Doti N."/>
            <person name="Fimia G.M."/>
            <person name="Lam N.V."/>
            <person name="Zhu C."/>
            <person name="Godin I."/>
            <person name="Muller K."/>
            <person name="Chatzi A."/>
            <person name="Nuebel E."/>
            <person name="Ciccosanti F."/>
            <person name="Flamant S."/>
            <person name="Benit P."/>
            <person name="Perfettini J.L."/>
            <person name="Sauvat A."/>
            <person name="Bennaceur-Griscelli A."/>
            <person name="Ser-Le Roux K."/>
            <person name="Gonin P."/>
            <person name="Tokatlidis K."/>
            <person name="Rustin P."/>
            <person name="Piacentini M."/>
            <person name="Ruvo M."/>
            <person name="Blomgren K."/>
            <person name="Kroemer G."/>
            <person name="Modjtahedi N."/>
        </authorList>
    </citation>
    <scope>FUNCTION</scope>
</reference>
<reference key="11">
    <citation type="journal article" date="2019" name="JCI Insight">
        <title>PARP1 inhibition alleviates injury in ARH3-deficient mice and human cells.</title>
        <authorList>
            <person name="Mashimo M."/>
            <person name="Bu X."/>
            <person name="Aoyama K."/>
            <person name="Kato J."/>
            <person name="Ishiwata-Endo H."/>
            <person name="Stevens L.A."/>
            <person name="Kasamatsu A."/>
            <person name="Wolfe L.A."/>
            <person name="Toro C."/>
            <person name="Adams D."/>
            <person name="Markello T."/>
            <person name="Gahl W.A."/>
            <person name="Moss J."/>
        </authorList>
    </citation>
    <scope>SUBCELLULAR LOCATION</scope>
    <scope>TISSUE SPECIFICITY</scope>
</reference>
<reference key="12">
    <citation type="journal article" date="2002" name="Nat. Struct. Biol.">
        <title>The crystal structure of the mouse apoptosis-inducing factor AIF.</title>
        <authorList>
            <person name="Mate M.J."/>
            <person name="Ortiz-Lombardia M."/>
            <person name="Boitel B."/>
            <person name="Haouz A."/>
            <person name="Tello D."/>
            <person name="Susin S.A."/>
            <person name="Penninger J."/>
            <person name="Kroemer G."/>
            <person name="Alzari P.M."/>
        </authorList>
    </citation>
    <scope>X-RAY CRYSTALLOGRAPHY (2.0 ANGSTROMS) OF 108-610 IN COMPLEX WITH FAD</scope>
    <scope>NAD-BINDING</scope>
    <scope>MUTAGENESIS OF LYS-176 AND GLU-313</scope>
</reference>
<reference evidence="16 17" key="13">
    <citation type="journal article" date="2009" name="J. Mol. Biol.">
        <title>Redox-linked conformational dynamics in apoptosis-inducing factor.</title>
        <authorList>
            <person name="Sevrioukova I.F."/>
        </authorList>
    </citation>
    <scope>X-RAY CRYSTALLOGRAPHY (2.24 ANGSTROMS) OF 78-612 IN COMPLEX WITH FAD AND NAD</scope>
    <scope>FAD-BINDING</scope>
    <scope>NAD-BINDING</scope>
    <scope>MUTAGENESIS OF TRP-195</scope>
    <scope>SUBUNIT</scope>
    <scope>COFACTOR</scope>
    <scope>BIOPHYSICOCHEMICAL PROPERTIES</scope>
    <scope>CATALYTIC ACTIVITY</scope>
</reference>
<organism>
    <name type="scientific">Mus musculus</name>
    <name type="common">Mouse</name>
    <dbReference type="NCBI Taxonomy" id="10090"/>
    <lineage>
        <taxon>Eukaryota</taxon>
        <taxon>Metazoa</taxon>
        <taxon>Chordata</taxon>
        <taxon>Craniata</taxon>
        <taxon>Vertebrata</taxon>
        <taxon>Euteleostomi</taxon>
        <taxon>Mammalia</taxon>
        <taxon>Eutheria</taxon>
        <taxon>Euarchontoglires</taxon>
        <taxon>Glires</taxon>
        <taxon>Rodentia</taxon>
        <taxon>Myomorpha</taxon>
        <taxon>Muroidea</taxon>
        <taxon>Muridae</taxon>
        <taxon>Murinae</taxon>
        <taxon>Mus</taxon>
        <taxon>Mus</taxon>
    </lineage>
</organism>
<accession>Q9Z0X1</accession>
<accession>Q1L6K5</accession>
<keyword id="KW-0002">3D-structure</keyword>
<keyword id="KW-0007">Acetylation</keyword>
<keyword id="KW-0025">Alternative splicing</keyword>
<keyword id="KW-0053">Apoptosis</keyword>
<keyword id="KW-0963">Cytoplasm</keyword>
<keyword id="KW-0903">Direct protein sequencing</keyword>
<keyword id="KW-0238">DNA-binding</keyword>
<keyword id="KW-0274">FAD</keyword>
<keyword id="KW-0285">Flavoprotein</keyword>
<keyword id="KW-1017">Isopeptide bond</keyword>
<keyword id="KW-0472">Membrane</keyword>
<keyword id="KW-0496">Mitochondrion</keyword>
<keyword id="KW-0999">Mitochondrion inner membrane</keyword>
<keyword id="KW-0520">NAD</keyword>
<keyword id="KW-0539">Nucleus</keyword>
<keyword id="KW-0560">Oxidoreductase</keyword>
<keyword id="KW-0597">Phosphoprotein</keyword>
<keyword id="KW-1185">Reference proteome</keyword>
<keyword id="KW-0809">Transit peptide</keyword>
<keyword id="KW-0832">Ubl conjugation</keyword>
<protein>
    <recommendedName>
        <fullName evidence="12">Apoptosis-inducing factor 1, mitochondrial</fullName>
        <ecNumber evidence="7">1.6.99.-</ecNumber>
    </recommendedName>
    <alternativeName>
        <fullName>Programmed cell death protein 8</fullName>
    </alternativeName>
</protein>
<evidence type="ECO:0000250" key="1">
    <source>
        <dbReference type="UniProtKB" id="O95831"/>
    </source>
</evidence>
<evidence type="ECO:0000255" key="2"/>
<evidence type="ECO:0000256" key="3">
    <source>
        <dbReference type="SAM" id="MobiDB-lite"/>
    </source>
</evidence>
<evidence type="ECO:0000269" key="4">
    <source>
    </source>
</evidence>
<evidence type="ECO:0000269" key="5">
    <source>
    </source>
</evidence>
<evidence type="ECO:0000269" key="6">
    <source>
    </source>
</evidence>
<evidence type="ECO:0000269" key="7">
    <source>
    </source>
</evidence>
<evidence type="ECO:0000269" key="8">
    <source>
    </source>
</evidence>
<evidence type="ECO:0000269" key="9">
    <source>
    </source>
</evidence>
<evidence type="ECO:0000269" key="10">
    <source>
    </source>
</evidence>
<evidence type="ECO:0000303" key="11">
    <source>
    </source>
</evidence>
<evidence type="ECO:0000305" key="12"/>
<evidence type="ECO:0000305" key="13">
    <source>
    </source>
</evidence>
<evidence type="ECO:0000312" key="14">
    <source>
        <dbReference type="EMBL" id="AAY84740.1"/>
    </source>
</evidence>
<evidence type="ECO:0000312" key="15">
    <source>
        <dbReference type="MGI" id="MGI:1349419"/>
    </source>
</evidence>
<evidence type="ECO:0007744" key="16">
    <source>
        <dbReference type="PDB" id="3GD3"/>
    </source>
</evidence>
<evidence type="ECO:0007744" key="17">
    <source>
        <dbReference type="PDB" id="3GD4"/>
    </source>
</evidence>
<evidence type="ECO:0007744" key="18">
    <source>
    </source>
</evidence>
<evidence type="ECO:0007744" key="19">
    <source>
    </source>
</evidence>
<evidence type="ECO:0007829" key="20">
    <source>
        <dbReference type="PDB" id="1GV4"/>
    </source>
</evidence>
<evidence type="ECO:0007829" key="21">
    <source>
        <dbReference type="PDB" id="3GD3"/>
    </source>
</evidence>
<evidence type="ECO:0007829" key="22">
    <source>
        <dbReference type="PDB" id="3GD4"/>
    </source>
</evidence>
<evidence type="ECO:0007829" key="23">
    <source>
        <dbReference type="PDB" id="5MIU"/>
    </source>
</evidence>
<evidence type="ECO:0007829" key="24">
    <source>
        <dbReference type="PDB" id="8QNS"/>
    </source>
</evidence>
<gene>
    <name evidence="15" type="primary">Aifm1</name>
    <name type="synonym">Aif</name>
    <name type="synonym">Pdcd8</name>
</gene>
<sequence length="612" mass="66765">MFRCGGLAGAFKQKLVPLVRTVYVQRPKQRNRLPGNLFQQWRVPLELQMARQMASSGSSGGKMDNSVLVLIVGLSTIGAGAYAYKTIKEDQKRYNERVMGLGLSPEEKQRRAIASATEGGSVPQIRAPSHVPFLLIGGGTAAFAAARSIRARDPGARVLIVSEDPELPYMRPPLSKELWFSDDPNVTKTLQFRQWNGKERSIYFQPPSFYVSAQDLPNIENGGVAVLTGKKVVHLDVRGNMVKLNDGSQITFEKCLIATGGTPRSLSAIDRAGAEVKSRTTLFRKIGDFRALEKISREVKSITVIGGGFLGSELACALGRKSQASGIEVIQLFPEKGNMGKILPQYLSNWTMEKVKREGVKVMPNAIVQSVGVSGGRLLIKLKDGRKVETDHIVTAVGLEPNVELAKTGGLEIDSDFGGFRVNAELQARSNIWVAGDAACFYDIKLGRRRVEHHDHAVVSGRLAGENMTGAAKPYWHQSMFWSDLGPDVGYEAIGLVDSSLPTVGVFAKATAQDNPKSATEQSGTGIRSESETESEASEITIPPSAPAVPQVPVEGEDYGKGVIFYLRDKVVVGIVLWNVFNRMPIARKIIKDGEQHEDLNEVAKLFNIHED</sequence>
<comment type="function">
    <text evidence="1 5 7 8 10">Functions both as NADH oxidoreductase and as regulator of apoptosis (By similarity). In response to apoptotic stimuli, it is released from the mitochondrion intermembrane space into the cytosol and to the nucleus, where it functions as a proapoptotic factor in a caspase-independent pathway (PubMed:12114629, PubMed:21467298, PubMed:9989411). Release into the cytoplasm is mediated upon binding to poly-ADP-ribose chains (PubMed:21467298). The soluble form (AIFsol) found in the nucleus induces 'parthanatos' i.e. caspase-independent fragmentation of chromosomal DNA (PubMed:12114629, PubMed:21467298, PubMed:9989411). Binds to DNA in a sequence-independent manner (PubMed:21467298). Interacts with EIF3G, and thereby inhibits the EIF3 machinery and protein synthesis, and activates caspase-7 to amplify apoptosis (By similarity). Plays a critical role in caspase-independent, pyknotic cell death in hydrogen peroxide-exposed cells (By similarity). In contrast, participates in normal mitochondrial metabolism. Plays an important role in the regulation of respiratory chain biogenesis by interacting with CHCHD4 and controlling CHCHD4 mitochondrial import (PubMed:19447115).</text>
</comment>
<comment type="catalytic activity">
    <reaction evidence="7">
        <text>A + NADH + H(+) = AH2 + NAD(+)</text>
        <dbReference type="Rhea" id="RHEA:11356"/>
        <dbReference type="ChEBI" id="CHEBI:13193"/>
        <dbReference type="ChEBI" id="CHEBI:15378"/>
        <dbReference type="ChEBI" id="CHEBI:17499"/>
        <dbReference type="ChEBI" id="CHEBI:57540"/>
        <dbReference type="ChEBI" id="CHEBI:57945"/>
    </reaction>
</comment>
<comment type="catalytic activity">
    <molecule>Isoform 2</molecule>
    <reaction evidence="1">
        <text>A + NADH + H(+) = AH2 + NAD(+)</text>
        <dbReference type="Rhea" id="RHEA:11356"/>
        <dbReference type="ChEBI" id="CHEBI:13193"/>
        <dbReference type="ChEBI" id="CHEBI:15378"/>
        <dbReference type="ChEBI" id="CHEBI:17499"/>
        <dbReference type="ChEBI" id="CHEBI:57540"/>
        <dbReference type="ChEBI" id="CHEBI:57945"/>
    </reaction>
</comment>
<comment type="cofactor">
    <cofactor evidence="7 10">
        <name>FAD</name>
        <dbReference type="ChEBI" id="CHEBI:57692"/>
    </cofactor>
</comment>
<comment type="biophysicochemical properties">
    <kinetics>
        <text evidence="7">kcat is 48 min(-1) for dichlorophenolindophenol and 34 min(-1) for cytochrome c.</text>
    </kinetics>
</comment>
<comment type="subunit">
    <text evidence="1 7">Monomer (oxidized form). Homodimer (reduced form) (By similarity). Upon reduction with NADH, undergoes dimerization and forms tight, long-lived FADH2-NAD charge transfer complexes (CTC) resistant to oxidation (PubMed:19447115). Also dimerizes with isoform 3 preventing its release from mitochondria (By similarity). Interacts with XIAP/BIRC4 (By similarity). Interacts (via N-terminus) with EIF3G (via C-terminus) (By similarity). Interacts with PRELID1 (By similarity). Interacts with CHCHD4; the interaction increases in presence of NADH (By similarity). Interacts with processed form of PARP1 (Poly [ADP-ribose] polymerase 1, processed C-terminus); interaction is mediated with poly-ADP-ribose chains attached to PARP1, promoting translocation into the nucleus (By similarity).</text>
</comment>
<comment type="interaction">
    <interactant intactId="EBI-773597">
        <id>Q9Z0X1</id>
    </interactant>
    <interactant intactId="EBI-495621">
        <id>P27661</id>
        <label>H2ax</label>
    </interactant>
    <organismsDiffer>false</organismsDiffer>
    <experiments>3</experiments>
</comment>
<comment type="interaction">
    <interactant intactId="EBI-773597">
        <id>Q9Z0X1</id>
    </interactant>
    <interactant intactId="EBI-7821198">
        <id>Q9EQN3</id>
        <label>Tsc22d4</label>
    </interactant>
    <organismsDiffer>false</organismsDiffer>
    <experiments>4</experiments>
</comment>
<comment type="interaction">
    <interactant intactId="EBI-5326677">
        <id>PRO_0000022031</id>
    </interactant>
    <interactant intactId="EBI-494830">
        <id>P16104</id>
        <label>H2AX</label>
    </interactant>
    <organismsDiffer>true</organismsDiffer>
    <experiments>2</experiments>
</comment>
<comment type="subcellular location">
    <subcellularLocation>
        <location evidence="10">Mitochondrion intermembrane space</location>
    </subcellularLocation>
    <subcellularLocation>
        <location evidence="9">Mitochondrion inner membrane</location>
    </subcellularLocation>
    <subcellularLocation>
        <location evidence="8">Cytoplasm</location>
    </subcellularLocation>
    <subcellularLocation>
        <location evidence="5">Nucleus</location>
    </subcellularLocation>
    <subcellularLocation>
        <location evidence="1">Cytoplasm</location>
        <location evidence="1">Perinuclear region</location>
    </subcellularLocation>
    <text evidence="1 5">Proteolytic cleavage during or just after translocation into the mitochondrial intermembrane space (IMS) results in the formation of an inner-membrane-anchored mature form (AIFmit) (By similarity). During apoptosis, further proteolytic processing leads to a mature form, which is confined to the mitochondrial IMS in a soluble form (AIFsol) (By similarity). AIFsol is released to the cytoplasm in response to specific death signals, and translocated to the nucleus, where it induces nuclear apoptosis (PubMed:12114629). Release into the cytoplasm is mediated upon binding to poly-ADP-ribose chains (PubMed:21467298). Translocation into the nucleus is promoted by interaction with (auto-poly-ADP-ribosylated) processed form of PARP1 (By similarity). Colocalizes with EIF3G in the nucleus and perinuclear region.</text>
</comment>
<comment type="subcellular location">
    <molecule>Isoform 2</molecule>
    <subcellularLocation>
        <location evidence="6">Mitochondrion</location>
    </subcellularLocation>
    <subcellularLocation>
        <location evidence="1">Cytoplasm</location>
        <location evidence="1">Cytosol</location>
    </subcellularLocation>
    <text evidence="1">In pro-apoptotic conditions, is released from mitochondria to cytosol in a calpain/cathepsin-dependent manner.</text>
</comment>
<comment type="alternative products">
    <event type="alternative splicing"/>
    <isoform>
        <id>Q9Z0X1-1</id>
        <name>1</name>
        <sequence type="displayed"/>
    </isoform>
    <isoform>
        <id>Q9Z0X1-2</id>
        <name>2</name>
        <name evidence="11">AIFsh2</name>
        <sequence type="described" ref="VSP_060486 VSP_060487"/>
    </isoform>
</comment>
<comment type="tissue specificity">
    <text evidence="9">Expressed in cortical neurons (at protein level).</text>
</comment>
<comment type="tissue specificity">
    <molecule>Isoform 2</molecule>
    <text evidence="6">Expressed in liver (at protein level).</text>
</comment>
<comment type="PTM">
    <text evidence="1">Under normal conditions, a 54-residue N-terminal segment is first proteolytically removed during or just after translocation into the mitochondrial intermembrane space (IMS) by the mitochondrial processing peptidase (MPP) to form the inner-membrane-anchored mature form (AIFmit). During apoptosis, it is further proteolytically processed at amino-acid position 101 leading to the generation of the mature form, which is confined to the mitochondrial IMS in a soluble form (AIFsol). AIFsol is released to the cytoplasm in response to specific death signals, and translocated to the nucleus, where it induces nuclear apoptosis in a caspase-independent manner.</text>
</comment>
<comment type="PTM">
    <text evidence="1">Ubiquitination by XIAP/BIRC4 does not lead to proteasomal degradation. Ubiquitination at Lys-254 by XIAP/BIRC4 blocks its ability to bind DNA and induce chromatin degradation, thereby inhibiting its ability to induce cell death.</text>
</comment>
<comment type="similarity">
    <text evidence="12">Belongs to the FAD-dependent oxidoreductase family.</text>
</comment>
<proteinExistence type="evidence at protein level"/>